<accession>P26649</accession>
<protein>
    <recommendedName>
        <fullName evidence="1 5">Surface composition regulator</fullName>
    </recommendedName>
</protein>
<sequence>MDHSLNSLNNFDFLARSFARMHAEGRPVDILAVTGNMDEEHRTWFCARYAWYCQQMMQARELELEH</sequence>
<dbReference type="EMBL" id="Z11885">
    <property type="protein sequence ID" value="CAA77940.1"/>
    <property type="molecule type" value="Genomic_DNA"/>
</dbReference>
<dbReference type="EMBL" id="U00096">
    <property type="protein sequence ID" value="AAC76085.1"/>
    <property type="molecule type" value="Genomic_DNA"/>
</dbReference>
<dbReference type="EMBL" id="AP009048">
    <property type="protein sequence ID" value="BAA16577.1"/>
    <property type="molecule type" value="Genomic_DNA"/>
</dbReference>
<dbReference type="PIR" id="S25201">
    <property type="entry name" value="S25201"/>
</dbReference>
<dbReference type="RefSeq" id="NP_417521.1">
    <property type="nucleotide sequence ID" value="NC_000913.3"/>
</dbReference>
<dbReference type="RefSeq" id="WP_000350095.1">
    <property type="nucleotide sequence ID" value="NZ_STEB01000001.1"/>
</dbReference>
<dbReference type="PDB" id="1RRZ">
    <property type="method" value="NMR"/>
    <property type="chains" value="A=1-66"/>
</dbReference>
<dbReference type="PDBsum" id="1RRZ"/>
<dbReference type="SMR" id="P26649"/>
<dbReference type="BioGRID" id="4262385">
    <property type="interactions" value="17"/>
</dbReference>
<dbReference type="FunCoup" id="P26649">
    <property type="interactions" value="129"/>
</dbReference>
<dbReference type="IntAct" id="P26649">
    <property type="interactions" value="2"/>
</dbReference>
<dbReference type="STRING" id="511145.b3049"/>
<dbReference type="jPOST" id="P26649"/>
<dbReference type="PaxDb" id="511145-b3049"/>
<dbReference type="EnsemblBacteria" id="AAC76085">
    <property type="protein sequence ID" value="AAC76085"/>
    <property type="gene ID" value="b3049"/>
</dbReference>
<dbReference type="GeneID" id="93778946"/>
<dbReference type="GeneID" id="947533"/>
<dbReference type="KEGG" id="ecj:JW3021"/>
<dbReference type="KEGG" id="eco:b3049"/>
<dbReference type="KEGG" id="ecoc:C3026_16650"/>
<dbReference type="PATRIC" id="fig|1411691.4.peg.3682"/>
<dbReference type="EchoBASE" id="EB1355"/>
<dbReference type="eggNOG" id="ENOG5032ZQX">
    <property type="taxonomic scope" value="Bacteria"/>
</dbReference>
<dbReference type="HOGENOM" id="CLU_185971_0_0_6"/>
<dbReference type="InParanoid" id="P26649"/>
<dbReference type="OMA" id="HRSWFCK"/>
<dbReference type="OrthoDB" id="6563429at2"/>
<dbReference type="PhylomeDB" id="P26649"/>
<dbReference type="BioCyc" id="EcoCyc:EG11381-MONOMER"/>
<dbReference type="EvolutionaryTrace" id="P26649"/>
<dbReference type="PRO" id="PR:P26649"/>
<dbReference type="Proteomes" id="UP000000625">
    <property type="component" value="Chromosome"/>
</dbReference>
<dbReference type="GO" id="GO:1902201">
    <property type="term" value="P:negative regulation of bacterial-type flagellum-dependent cell motility"/>
    <property type="evidence" value="ECO:0000315"/>
    <property type="project" value="EcoCyc"/>
</dbReference>
<dbReference type="GO" id="GO:1900232">
    <property type="term" value="P:negative regulation of single-species biofilm formation on inanimate substrate"/>
    <property type="evidence" value="ECO:0000315"/>
    <property type="project" value="EcoCyc"/>
</dbReference>
<dbReference type="FunFam" id="1.20.970.20:FF:000001">
    <property type="entry name" value="Surface composition regulator"/>
    <property type="match status" value="1"/>
</dbReference>
<dbReference type="Gene3D" id="1.20.970.20">
    <property type="entry name" value="Glycogen synthesis protein GlgS"/>
    <property type="match status" value="1"/>
</dbReference>
<dbReference type="HAMAP" id="MF_00525">
    <property type="entry name" value="GlgS"/>
    <property type="match status" value="1"/>
</dbReference>
<dbReference type="InterPro" id="IPR015065">
    <property type="entry name" value="GlgS"/>
</dbReference>
<dbReference type="InterPro" id="IPR036295">
    <property type="entry name" value="GlgS_sf"/>
</dbReference>
<dbReference type="NCBIfam" id="NF002793">
    <property type="entry name" value="PRK02922.1"/>
    <property type="match status" value="1"/>
</dbReference>
<dbReference type="Pfam" id="PF08971">
    <property type="entry name" value="GlgS"/>
    <property type="match status" value="1"/>
</dbReference>
<dbReference type="SUPFAM" id="SSF109747">
    <property type="entry name" value="Glycogen synthesis protein GlgS"/>
    <property type="match status" value="1"/>
</dbReference>
<reference key="1">
    <citation type="journal article" date="1992" name="Mol. Microbiol.">
        <title>Identification and molecular analysis of glgS, a novel growth-phase-regulated and rpoS-dependent gene involved in glycogen synthesis in Escherichia coli.</title>
        <authorList>
            <person name="Hengge-Aronis R."/>
            <person name="Fischer D."/>
        </authorList>
    </citation>
    <scope>NUCLEOTIDE SEQUENCE [GENOMIC DNA]</scope>
    <scope>INDUCTION</scope>
    <source>
        <strain>K12</strain>
    </source>
</reference>
<reference key="2">
    <citation type="journal article" date="1997" name="DNA Res.">
        <title>Construction of a contiguous 874-kb sequence of the Escherichia coli-K12 genome corresponding to 50.0-68.8 min on the linkage map and analysis of its sequence features.</title>
        <authorList>
            <person name="Yamamoto Y."/>
            <person name="Aiba H."/>
            <person name="Baba T."/>
            <person name="Hayashi K."/>
            <person name="Inada T."/>
            <person name="Isono K."/>
            <person name="Itoh T."/>
            <person name="Kimura S."/>
            <person name="Kitagawa M."/>
            <person name="Makino K."/>
            <person name="Miki T."/>
            <person name="Mitsuhashi N."/>
            <person name="Mizobuchi K."/>
            <person name="Mori H."/>
            <person name="Nakade S."/>
            <person name="Nakamura Y."/>
            <person name="Nashimoto H."/>
            <person name="Oshima T."/>
            <person name="Oyama S."/>
            <person name="Saito N."/>
            <person name="Sampei G."/>
            <person name="Satoh Y."/>
            <person name="Sivasundaram S."/>
            <person name="Tagami H."/>
            <person name="Takahashi H."/>
            <person name="Takeda J."/>
            <person name="Takemoto K."/>
            <person name="Uehara K."/>
            <person name="Wada C."/>
            <person name="Yamagata S."/>
            <person name="Horiuchi T."/>
        </authorList>
    </citation>
    <scope>NUCLEOTIDE SEQUENCE [LARGE SCALE GENOMIC DNA]</scope>
    <source>
        <strain>K12 / W3110 / ATCC 27325 / DSM 5911</strain>
    </source>
</reference>
<reference key="3">
    <citation type="journal article" date="1997" name="Science">
        <title>The complete genome sequence of Escherichia coli K-12.</title>
        <authorList>
            <person name="Blattner F.R."/>
            <person name="Plunkett G. III"/>
            <person name="Bloch C.A."/>
            <person name="Perna N.T."/>
            <person name="Burland V."/>
            <person name="Riley M."/>
            <person name="Collado-Vides J."/>
            <person name="Glasner J.D."/>
            <person name="Rode C.K."/>
            <person name="Mayhew G.F."/>
            <person name="Gregor J."/>
            <person name="Davis N.W."/>
            <person name="Kirkpatrick H.A."/>
            <person name="Goeden M.A."/>
            <person name="Rose D.J."/>
            <person name="Mau B."/>
            <person name="Shao Y."/>
        </authorList>
    </citation>
    <scope>NUCLEOTIDE SEQUENCE [LARGE SCALE GENOMIC DNA]</scope>
    <source>
        <strain>K12 / MG1655 / ATCC 47076</strain>
    </source>
</reference>
<reference key="4">
    <citation type="journal article" date="2006" name="Mol. Syst. Biol.">
        <title>Highly accurate genome sequences of Escherichia coli K-12 strains MG1655 and W3110.</title>
        <authorList>
            <person name="Hayashi K."/>
            <person name="Morooka N."/>
            <person name="Yamamoto Y."/>
            <person name="Fujita K."/>
            <person name="Isono K."/>
            <person name="Choi S."/>
            <person name="Ohtsubo E."/>
            <person name="Baba T."/>
            <person name="Wanner B.L."/>
            <person name="Mori H."/>
            <person name="Horiuchi T."/>
        </authorList>
    </citation>
    <scope>NUCLEOTIDE SEQUENCE [LARGE SCALE GENOMIC DNA]</scope>
    <source>
        <strain>K12 / W3110 / ATCC 27325 / DSM 5911</strain>
    </source>
</reference>
<reference key="5">
    <citation type="journal article" date="2013" name="Biochem. J.">
        <title>GlgS, described previously as a glycogen synthesis control protein, negatively regulates motility and biofilm formation in Escherichia coli.</title>
        <authorList>
            <person name="Rahimpour M."/>
            <person name="Montero M."/>
            <person name="Almagro G."/>
            <person name="Viale A.M."/>
            <person name="Sevilla A."/>
            <person name="Canovas M."/>
            <person name="Munoz F.J."/>
            <person name="Baroja-Fernandez E."/>
            <person name="Bahaji A."/>
            <person name="Eydallin G."/>
            <person name="Dose H."/>
            <person name="Takeuchi R."/>
            <person name="Mori H."/>
            <person name="Pozueta-Romero J."/>
        </authorList>
    </citation>
    <scope>FUNCTION</scope>
    <scope>DISRUPTION PHENOTYPE</scope>
    <source>
        <strain>K12 / BW25113</strain>
    </source>
</reference>
<reference evidence="8" key="6">
    <citation type="journal article" date="1997" name="Eur. J. Biochem.">
        <title>1H, 15N and 13C NMR assignments, secondary structure and overall topology of the Escherichia coli GlgS protein.</title>
        <authorList>
            <person name="Beglova N."/>
            <person name="Fischer D."/>
            <person name="Hengge-Aronis R."/>
            <person name="Gehring K."/>
        </authorList>
    </citation>
    <scope>STRUCTURE BY NMR</scope>
</reference>
<feature type="chain" id="PRO_0000071599" description="Surface composition regulator">
    <location>
        <begin position="1"/>
        <end position="66"/>
    </location>
</feature>
<feature type="turn" evidence="9">
    <location>
        <begin position="3"/>
        <end position="6"/>
    </location>
</feature>
<feature type="helix" evidence="9">
    <location>
        <begin position="7"/>
        <end position="24"/>
    </location>
</feature>
<feature type="helix" evidence="9">
    <location>
        <begin position="30"/>
        <end position="36"/>
    </location>
</feature>
<feature type="helix" evidence="9">
    <location>
        <begin position="41"/>
        <end position="59"/>
    </location>
</feature>
<gene>
    <name evidence="4" type="primary">glgS</name>
    <name evidence="5" type="synonym">scoR</name>
    <name type="ordered locus">b3049</name>
    <name type="ordered locus">JW3021</name>
</gene>
<organism>
    <name type="scientific">Escherichia coli (strain K12)</name>
    <dbReference type="NCBI Taxonomy" id="83333"/>
    <lineage>
        <taxon>Bacteria</taxon>
        <taxon>Pseudomonadati</taxon>
        <taxon>Pseudomonadota</taxon>
        <taxon>Gammaproteobacteria</taxon>
        <taxon>Enterobacterales</taxon>
        <taxon>Enterobacteriaceae</taxon>
        <taxon>Escherichia</taxon>
    </lineage>
</organism>
<keyword id="KW-0002">3D-structure</keyword>
<keyword id="KW-1185">Reference proteome</keyword>
<evidence type="ECO:0000255" key="1">
    <source>
        <dbReference type="HAMAP-Rule" id="MF_00525"/>
    </source>
</evidence>
<evidence type="ECO:0000269" key="2">
    <source>
    </source>
</evidence>
<evidence type="ECO:0000269" key="3">
    <source>
    </source>
</evidence>
<evidence type="ECO:0000303" key="4">
    <source>
    </source>
</evidence>
<evidence type="ECO:0000303" key="5">
    <source>
    </source>
</evidence>
<evidence type="ECO:0000305" key="6">
    <source>
    </source>
</evidence>
<evidence type="ECO:0000305" key="7">
    <source>
    </source>
</evidence>
<evidence type="ECO:0007744" key="8">
    <source>
        <dbReference type="PDB" id="1RRZ"/>
    </source>
</evidence>
<evidence type="ECO:0007829" key="9">
    <source>
        <dbReference type="PDB" id="1RRZ"/>
    </source>
</evidence>
<comment type="function">
    <text evidence="1 3">Major determinant of cell surface composition. Negatively regulates motility, adhesion and synthesis of biofilm exopolysaccharides.</text>
</comment>
<comment type="induction">
    <text evidence="2">Expression is dependent on RpoS.</text>
</comment>
<comment type="disruption phenotype">
    <text evidence="3">Deletion mutants show increased flagella and fimbriae production, are hypermotile, and exhibit increased biofilm formation.</text>
</comment>
<comment type="similarity">
    <text evidence="1">Belongs to the GlgS family.</text>
</comment>
<comment type="caution">
    <text evidence="6 7">Was originally thought to be involved in glycogen synthesis, but it was shown later that its effect on glycogen metabolism is probably indirect.</text>
</comment>
<name>GLGS_ECOLI</name>
<proteinExistence type="evidence at protein level"/>